<proteinExistence type="evidence at protein level"/>
<reference key="1">
    <citation type="journal article" date="2019" name="J. Exp. Bot.">
        <title>PLENTY, a hydroxyproline O-arabinosyltransferase, negatively regulates root nodule symbiosis in Lotus japonicus.</title>
        <authorList>
            <person name="Yoro E."/>
            <person name="Nishida H."/>
            <person name="Ogawa-Ohnishi M."/>
            <person name="Yoshida C."/>
            <person name="Suzaki T."/>
            <person name="Matsubayashi Y."/>
            <person name="Kawaguchi M."/>
        </authorList>
    </citation>
    <scope>NUCLEOTIDE SEQUENCE [MRNA]</scope>
    <scope>FUNCTION</scope>
    <scope>CATALYTIC ACTIVITY</scope>
    <scope>SUBCELLULAR LOCATION</scope>
    <scope>DISRUPTION PHENOTYPE</scope>
    <source>
        <tissue>Root</tissue>
    </source>
</reference>
<feature type="chain" id="PRO_0000448630" description="Hydroxyproline O-arabinosyltransferase PLENTY">
    <location>
        <begin position="1"/>
        <end position="361"/>
    </location>
</feature>
<feature type="transmembrane region" description="Helical; Signal-anchor" evidence="1">
    <location>
        <begin position="13"/>
        <end position="33"/>
    </location>
</feature>
<protein>
    <recommendedName>
        <fullName evidence="4">Hydroxyproline O-arabinosyltransferase PLENTY</fullName>
        <ecNumber evidence="2">2.4.2.58</ecNumber>
    </recommendedName>
</protein>
<accession>A0A0A1H7M6</accession>
<name>PLETY_LOTJA</name>
<sequence length="361" mass="41425">MIVRKNMGRAKSLLMLLMVLGFFFATYNLVSMIMDHRAGNWVADGLESFDRKMLGSASTNAKYHVALTATDAAYSQWQCRIMYYWYKKVKDMPGSNMGKFTRILHSGRTDQLMDEIPTFVVDPLPEGLDRGYIVLNRPWAFVQWLEKADIEEEYILMAEPDHIFVNPLPNLASRTQPAGYPFFYIKPAENEKIIRKFYPKDKGPVTDVDPIGNSPVIIQKSLIEEIAPTWVNVSLRMKDDPETDKAFGWVLEMYAYAVASALHGVKHILRKDFMLQPPWDRHVGKTFIIHYTYGCDYNLKGELTYGKIGEWRFDKRSYLMGPPPKNLSLPPPGVPESVVRLVKMVNEATANIPEWDSLNRS</sequence>
<gene>
    <name evidence="3" type="primary">PLENTY</name>
</gene>
<evidence type="ECO:0000255" key="1"/>
<evidence type="ECO:0000269" key="2">
    <source>
    </source>
</evidence>
<evidence type="ECO:0000303" key="3">
    <source>
    </source>
</evidence>
<evidence type="ECO:0000305" key="4"/>
<evidence type="ECO:0000305" key="5">
    <source>
    </source>
</evidence>
<dbReference type="EC" id="2.4.2.58" evidence="2"/>
<dbReference type="EMBL" id="LC010646">
    <property type="protein sequence ID" value="BAP90378.1"/>
    <property type="molecule type" value="mRNA"/>
</dbReference>
<dbReference type="SMR" id="A0A0A1H7M6"/>
<dbReference type="OMA" id="VIHNKAS"/>
<dbReference type="OrthoDB" id="10259977at2759"/>
<dbReference type="GO" id="GO:0000139">
    <property type="term" value="C:Golgi membrane"/>
    <property type="evidence" value="ECO:0007669"/>
    <property type="project" value="UniProtKB-SubCell"/>
</dbReference>
<dbReference type="GO" id="GO:1990585">
    <property type="term" value="F:hydroxyproline O-arabinosyltransferase activity"/>
    <property type="evidence" value="ECO:0007669"/>
    <property type="project" value="UniProtKB-EC"/>
</dbReference>
<dbReference type="InterPro" id="IPR056508">
    <property type="entry name" value="HPAT-like"/>
</dbReference>
<dbReference type="InterPro" id="IPR044845">
    <property type="entry name" value="HPAT/SRGT1-like"/>
</dbReference>
<dbReference type="PANTHER" id="PTHR31485:SF4">
    <property type="entry name" value="HYDROXYPROLINE O-ARABINOSYLTRANSFERASE RDN1"/>
    <property type="match status" value="1"/>
</dbReference>
<dbReference type="PANTHER" id="PTHR31485">
    <property type="entry name" value="PEPTIDYL SERINE ALPHA-GALACTOSYLTRANSFERASE"/>
    <property type="match status" value="1"/>
</dbReference>
<dbReference type="Pfam" id="PF23452">
    <property type="entry name" value="HPAT"/>
    <property type="match status" value="1"/>
</dbReference>
<keyword id="KW-0328">Glycosyltransferase</keyword>
<keyword id="KW-0333">Golgi apparatus</keyword>
<keyword id="KW-0472">Membrane</keyword>
<keyword id="KW-0735">Signal-anchor</keyword>
<keyword id="KW-0808">Transferase</keyword>
<keyword id="KW-0812">Transmembrane</keyword>
<keyword id="KW-1133">Transmembrane helix</keyword>
<comment type="function">
    <text evidence="2 5">Glycosyltransferase involved in the O-arabinosylation of several proteins including extensins and small signaling peptides (Probable). Catalyzes the transfer of the initial L-arabinose to the hydroxyl group of Hyp residues (PubMed:30351431). Probably involved in the arabinosylation of CLAVATA3/ESR-related (CLE) signaling peptides that move from root to shoot, to interact with receptor kinase signaling that regulates nodulation (PubMed:30351431). Involved in long distance nodulation signaling events (PubMed:30351431). Involved in the autoregulation of nodulation (AON), a long distance systemic signaling from root to shoot and back again, which allows legumes to limit the number of root nodules formed based on available nitrogen and previous rhizobial colonization (PubMed:30351431).</text>
</comment>
<comment type="catalytic activity">
    <reaction evidence="2">
        <text>trans-4-hydroxy-L-prolyl-[protein] + UDP-beta-L-arabinofuranose = O-(beta-L-arabinofuranosyl)-trans-4-hydroxy-L-prolyl-[protein] + UDP + H(+)</text>
        <dbReference type="Rhea" id="RHEA:49472"/>
        <dbReference type="Rhea" id="RHEA-COMP:12408"/>
        <dbReference type="Rhea" id="RHEA-COMP:12409"/>
        <dbReference type="ChEBI" id="CHEBI:15378"/>
        <dbReference type="ChEBI" id="CHEBI:58223"/>
        <dbReference type="ChEBI" id="CHEBI:61463"/>
        <dbReference type="ChEBI" id="CHEBI:61965"/>
        <dbReference type="ChEBI" id="CHEBI:131610"/>
        <dbReference type="EC" id="2.4.2.58"/>
    </reaction>
    <physiologicalReaction direction="left-to-right" evidence="2">
        <dbReference type="Rhea" id="RHEA:49473"/>
    </physiologicalReaction>
</comment>
<comment type="subcellular location">
    <subcellularLocation>
        <location evidence="2">Golgi apparatus membrane</location>
        <topology evidence="1">Single-pass type II membrane protein</topology>
    </subcellularLocation>
</comment>
<comment type="disruption phenotype">
    <text evidence="2">Dramatic increase in root nodule number when inoculated with Mesorhizobium loti (PubMed:30351431). Inhibition of root and shoot growth (PubMed:30351431).</text>
</comment>
<organism>
    <name type="scientific">Lotus japonicus</name>
    <name type="common">Lotus corniculatus var. japonicus</name>
    <dbReference type="NCBI Taxonomy" id="34305"/>
    <lineage>
        <taxon>Eukaryota</taxon>
        <taxon>Viridiplantae</taxon>
        <taxon>Streptophyta</taxon>
        <taxon>Embryophyta</taxon>
        <taxon>Tracheophyta</taxon>
        <taxon>Spermatophyta</taxon>
        <taxon>Magnoliopsida</taxon>
        <taxon>eudicotyledons</taxon>
        <taxon>Gunneridae</taxon>
        <taxon>Pentapetalae</taxon>
        <taxon>rosids</taxon>
        <taxon>fabids</taxon>
        <taxon>Fabales</taxon>
        <taxon>Fabaceae</taxon>
        <taxon>Papilionoideae</taxon>
        <taxon>50 kb inversion clade</taxon>
        <taxon>NPAAA clade</taxon>
        <taxon>Hologalegina</taxon>
        <taxon>robinioid clade</taxon>
        <taxon>Loteae</taxon>
        <taxon>Lotus</taxon>
    </lineage>
</organism>